<keyword id="KW-1003">Cell membrane</keyword>
<keyword id="KW-0408">Iron</keyword>
<keyword id="KW-0472">Membrane</keyword>
<keyword id="KW-0479">Metal-binding</keyword>
<keyword id="KW-0503">Monooxygenase</keyword>
<keyword id="KW-0560">Oxidoreductase</keyword>
<keyword id="KW-0831">Ubiquinone biosynthesis</keyword>
<protein>
    <recommendedName>
        <fullName evidence="1">3-demethoxyubiquinol 3-hydroxylase</fullName>
        <shortName evidence="1">DMQ hydroxylase</shortName>
        <ecNumber evidence="1">1.14.99.60</ecNumber>
    </recommendedName>
    <alternativeName>
        <fullName evidence="1">2-nonaprenyl-3-methyl-6-methoxy-1,4-benzoquinol hydroxylase</fullName>
    </alternativeName>
</protein>
<comment type="function">
    <text evidence="1">Catalyzes the hydroxylation of 2-nonaprenyl-3-methyl-6-methoxy-1,4-benzoquinol during ubiquinone biosynthesis.</text>
</comment>
<comment type="catalytic activity">
    <reaction evidence="1">
        <text>a 5-methoxy-2-methyl-3-(all-trans-polyprenyl)benzene-1,4-diol + AH2 + O2 = a 3-demethylubiquinol + A + H2O</text>
        <dbReference type="Rhea" id="RHEA:50908"/>
        <dbReference type="Rhea" id="RHEA-COMP:10859"/>
        <dbReference type="Rhea" id="RHEA-COMP:10914"/>
        <dbReference type="ChEBI" id="CHEBI:13193"/>
        <dbReference type="ChEBI" id="CHEBI:15377"/>
        <dbReference type="ChEBI" id="CHEBI:15379"/>
        <dbReference type="ChEBI" id="CHEBI:17499"/>
        <dbReference type="ChEBI" id="CHEBI:84167"/>
        <dbReference type="ChEBI" id="CHEBI:84422"/>
        <dbReference type="EC" id="1.14.99.60"/>
    </reaction>
</comment>
<comment type="cofactor">
    <cofactor evidence="1">
        <name>Fe cation</name>
        <dbReference type="ChEBI" id="CHEBI:24875"/>
    </cofactor>
    <text evidence="1">Binds 2 iron ions per subunit.</text>
</comment>
<comment type="pathway">
    <text evidence="1">Cofactor biosynthesis; ubiquinone biosynthesis.</text>
</comment>
<comment type="subcellular location">
    <subcellularLocation>
        <location evidence="1">Cell membrane</location>
        <topology evidence="1">Peripheral membrane protein</topology>
    </subcellularLocation>
</comment>
<comment type="similarity">
    <text evidence="1">Belongs to the COQ7 family.</text>
</comment>
<evidence type="ECO:0000255" key="1">
    <source>
        <dbReference type="HAMAP-Rule" id="MF_01658"/>
    </source>
</evidence>
<gene>
    <name evidence="1" type="primary">coq7</name>
    <name type="ordered locus">PSPA7_0796</name>
</gene>
<proteinExistence type="inferred from homology"/>
<organism>
    <name type="scientific">Pseudomonas paraeruginosa (strain DSM 24068 / PA7)</name>
    <name type="common">Pseudomonas aeruginosa (strain PA7)</name>
    <dbReference type="NCBI Taxonomy" id="381754"/>
    <lineage>
        <taxon>Bacteria</taxon>
        <taxon>Pseudomonadati</taxon>
        <taxon>Pseudomonadota</taxon>
        <taxon>Gammaproteobacteria</taxon>
        <taxon>Pseudomonadales</taxon>
        <taxon>Pseudomonadaceae</taxon>
        <taxon>Pseudomonas</taxon>
        <taxon>Pseudomonas paraeruginosa</taxon>
    </lineage>
</organism>
<reference key="1">
    <citation type="submission" date="2007-06" db="EMBL/GenBank/DDBJ databases">
        <authorList>
            <person name="Dodson R.J."/>
            <person name="Harkins D."/>
            <person name="Paulsen I.T."/>
        </authorList>
    </citation>
    <scope>NUCLEOTIDE SEQUENCE [LARGE SCALE GENOMIC DNA]</scope>
    <source>
        <strain>DSM 24068 / PA7</strain>
    </source>
</reference>
<dbReference type="EC" id="1.14.99.60" evidence="1"/>
<dbReference type="EMBL" id="CP000744">
    <property type="protein sequence ID" value="ABR85404.1"/>
    <property type="molecule type" value="Genomic_DNA"/>
</dbReference>
<dbReference type="RefSeq" id="WP_012074213.1">
    <property type="nucleotide sequence ID" value="NC_009656.1"/>
</dbReference>
<dbReference type="SMR" id="A6UZF6"/>
<dbReference type="GeneID" id="77219158"/>
<dbReference type="KEGG" id="pap:PSPA7_0796"/>
<dbReference type="HOGENOM" id="CLU_088601_0_0_6"/>
<dbReference type="UniPathway" id="UPA00232"/>
<dbReference type="Proteomes" id="UP000001582">
    <property type="component" value="Chromosome"/>
</dbReference>
<dbReference type="GO" id="GO:0005886">
    <property type="term" value="C:plasma membrane"/>
    <property type="evidence" value="ECO:0007669"/>
    <property type="project" value="UniProtKB-SubCell"/>
</dbReference>
<dbReference type="GO" id="GO:0008682">
    <property type="term" value="F:3-demethoxyubiquinol 3-hydroxylase activity"/>
    <property type="evidence" value="ECO:0007669"/>
    <property type="project" value="UniProtKB-EC"/>
</dbReference>
<dbReference type="GO" id="GO:0046872">
    <property type="term" value="F:metal ion binding"/>
    <property type="evidence" value="ECO:0007669"/>
    <property type="project" value="UniProtKB-KW"/>
</dbReference>
<dbReference type="GO" id="GO:0006744">
    <property type="term" value="P:ubiquinone biosynthetic process"/>
    <property type="evidence" value="ECO:0007669"/>
    <property type="project" value="UniProtKB-UniRule"/>
</dbReference>
<dbReference type="CDD" id="cd01042">
    <property type="entry name" value="DMQH"/>
    <property type="match status" value="1"/>
</dbReference>
<dbReference type="FunFam" id="1.20.1260.10:FF:000013">
    <property type="entry name" value="2-nonaprenyl-3-methyl-6-methoxy-1,4-benzoquinol hydroxylase"/>
    <property type="match status" value="1"/>
</dbReference>
<dbReference type="Gene3D" id="1.20.1260.10">
    <property type="match status" value="1"/>
</dbReference>
<dbReference type="HAMAP" id="MF_01658">
    <property type="entry name" value="COQ7"/>
    <property type="match status" value="1"/>
</dbReference>
<dbReference type="InterPro" id="IPR047809">
    <property type="entry name" value="COQ7_proteobact"/>
</dbReference>
<dbReference type="InterPro" id="IPR012347">
    <property type="entry name" value="Ferritin-like"/>
</dbReference>
<dbReference type="InterPro" id="IPR009078">
    <property type="entry name" value="Ferritin-like_SF"/>
</dbReference>
<dbReference type="InterPro" id="IPR011566">
    <property type="entry name" value="Ubq_synth_Coq7"/>
</dbReference>
<dbReference type="NCBIfam" id="NF033656">
    <property type="entry name" value="DMQ_monoox_COQ7"/>
    <property type="match status" value="1"/>
</dbReference>
<dbReference type="PANTHER" id="PTHR11237:SF4">
    <property type="entry name" value="5-DEMETHOXYUBIQUINONE HYDROXYLASE, MITOCHONDRIAL"/>
    <property type="match status" value="1"/>
</dbReference>
<dbReference type="PANTHER" id="PTHR11237">
    <property type="entry name" value="COENZYME Q10 BIOSYNTHESIS PROTEIN 7"/>
    <property type="match status" value="1"/>
</dbReference>
<dbReference type="Pfam" id="PF03232">
    <property type="entry name" value="COQ7"/>
    <property type="match status" value="1"/>
</dbReference>
<dbReference type="SUPFAM" id="SSF47240">
    <property type="entry name" value="Ferritin-like"/>
    <property type="match status" value="1"/>
</dbReference>
<sequence length="215" mass="23658">MSADRHYSPIDRFLLQADSALRTLLPFSGQPARPSPAIVEPDGELSEEDTRHIAGLMRINHTGEVCAQALYQGQSLTARLPEVREAMEEAAEEEIDHLAWCEQRIRQLGSRPSVLNPIFYGLSFGVGAAAGLVSDRVSLGFVAATEDQVCKHLDEHLAQIPQEDRKSRAILEQMRVDEEQHSSNALAAGGLRFPAPVKLGMSLLAKVMTKSTYRI</sequence>
<name>COQ7_PSEP7</name>
<feature type="chain" id="PRO_0000338708" description="3-demethoxyubiquinol 3-hydroxylase">
    <location>
        <begin position="1"/>
        <end position="215"/>
    </location>
</feature>
<feature type="binding site" evidence="1">
    <location>
        <position position="64"/>
    </location>
    <ligand>
        <name>Fe cation</name>
        <dbReference type="ChEBI" id="CHEBI:24875"/>
        <label>1</label>
    </ligand>
</feature>
<feature type="binding site" evidence="1">
    <location>
        <position position="94"/>
    </location>
    <ligand>
        <name>Fe cation</name>
        <dbReference type="ChEBI" id="CHEBI:24875"/>
        <label>1</label>
    </ligand>
</feature>
<feature type="binding site" evidence="1">
    <location>
        <position position="94"/>
    </location>
    <ligand>
        <name>Fe cation</name>
        <dbReference type="ChEBI" id="CHEBI:24875"/>
        <label>2</label>
    </ligand>
</feature>
<feature type="binding site" evidence="1">
    <location>
        <position position="97"/>
    </location>
    <ligand>
        <name>Fe cation</name>
        <dbReference type="ChEBI" id="CHEBI:24875"/>
        <label>1</label>
    </ligand>
</feature>
<feature type="binding site" evidence="1">
    <location>
        <position position="146"/>
    </location>
    <ligand>
        <name>Fe cation</name>
        <dbReference type="ChEBI" id="CHEBI:24875"/>
        <label>2</label>
    </ligand>
</feature>
<feature type="binding site" evidence="1">
    <location>
        <position position="178"/>
    </location>
    <ligand>
        <name>Fe cation</name>
        <dbReference type="ChEBI" id="CHEBI:24875"/>
        <label>1</label>
    </ligand>
</feature>
<feature type="binding site" evidence="1">
    <location>
        <position position="178"/>
    </location>
    <ligand>
        <name>Fe cation</name>
        <dbReference type="ChEBI" id="CHEBI:24875"/>
        <label>2</label>
    </ligand>
</feature>
<feature type="binding site" evidence="1">
    <location>
        <position position="181"/>
    </location>
    <ligand>
        <name>Fe cation</name>
        <dbReference type="ChEBI" id="CHEBI:24875"/>
        <label>2</label>
    </ligand>
</feature>
<accession>A6UZF6</accession>